<feature type="chain" id="PRO_0000075135" description="Alanine--tRNA ligase">
    <location>
        <begin position="1"/>
        <end position="885"/>
    </location>
</feature>
<feature type="binding site" evidence="1">
    <location>
        <position position="572"/>
    </location>
    <ligand>
        <name>Zn(2+)</name>
        <dbReference type="ChEBI" id="CHEBI:29105"/>
    </ligand>
</feature>
<feature type="binding site" evidence="1">
    <location>
        <position position="576"/>
    </location>
    <ligand>
        <name>Zn(2+)</name>
        <dbReference type="ChEBI" id="CHEBI:29105"/>
    </ligand>
</feature>
<feature type="binding site" evidence="1">
    <location>
        <position position="675"/>
    </location>
    <ligand>
        <name>Zn(2+)</name>
        <dbReference type="ChEBI" id="CHEBI:29105"/>
    </ligand>
</feature>
<feature type="binding site" evidence="1">
    <location>
        <position position="679"/>
    </location>
    <ligand>
        <name>Zn(2+)</name>
        <dbReference type="ChEBI" id="CHEBI:29105"/>
    </ligand>
</feature>
<name>SYA_LEIXX</name>
<evidence type="ECO:0000255" key="1">
    <source>
        <dbReference type="HAMAP-Rule" id="MF_00036"/>
    </source>
</evidence>
<comment type="function">
    <text evidence="1">Catalyzes the attachment of alanine to tRNA(Ala) in a two-step reaction: alanine is first activated by ATP to form Ala-AMP and then transferred to the acceptor end of tRNA(Ala). Also edits incorrectly charged Ser-tRNA(Ala) and Gly-tRNA(Ala) via its editing domain.</text>
</comment>
<comment type="catalytic activity">
    <reaction evidence="1">
        <text>tRNA(Ala) + L-alanine + ATP = L-alanyl-tRNA(Ala) + AMP + diphosphate</text>
        <dbReference type="Rhea" id="RHEA:12540"/>
        <dbReference type="Rhea" id="RHEA-COMP:9657"/>
        <dbReference type="Rhea" id="RHEA-COMP:9923"/>
        <dbReference type="ChEBI" id="CHEBI:30616"/>
        <dbReference type="ChEBI" id="CHEBI:33019"/>
        <dbReference type="ChEBI" id="CHEBI:57972"/>
        <dbReference type="ChEBI" id="CHEBI:78442"/>
        <dbReference type="ChEBI" id="CHEBI:78497"/>
        <dbReference type="ChEBI" id="CHEBI:456215"/>
        <dbReference type="EC" id="6.1.1.7"/>
    </reaction>
</comment>
<comment type="cofactor">
    <cofactor evidence="1">
        <name>Zn(2+)</name>
        <dbReference type="ChEBI" id="CHEBI:29105"/>
    </cofactor>
    <text evidence="1">Binds 1 zinc ion per subunit.</text>
</comment>
<comment type="subcellular location">
    <subcellularLocation>
        <location evidence="1">Cytoplasm</location>
    </subcellularLocation>
</comment>
<comment type="domain">
    <text evidence="1">Consists of three domains; the N-terminal catalytic domain, the editing domain and the C-terminal C-Ala domain. The editing domain removes incorrectly charged amino acids, while the C-Ala domain, along with tRNA(Ala), serves as a bridge to cooperatively bring together the editing and aminoacylation centers thus stimulating deacylation of misacylated tRNAs.</text>
</comment>
<comment type="similarity">
    <text evidence="1">Belongs to the class-II aminoacyl-tRNA synthetase family.</text>
</comment>
<protein>
    <recommendedName>
        <fullName evidence="1">Alanine--tRNA ligase</fullName>
        <ecNumber evidence="1">6.1.1.7</ecNumber>
    </recommendedName>
    <alternativeName>
        <fullName evidence="1">Alanyl-tRNA synthetase</fullName>
        <shortName evidence="1">AlaRS</shortName>
    </alternativeName>
</protein>
<dbReference type="EC" id="6.1.1.7" evidence="1"/>
<dbReference type="EMBL" id="AE016822">
    <property type="protein sequence ID" value="AAT88944.1"/>
    <property type="molecule type" value="Genomic_DNA"/>
</dbReference>
<dbReference type="RefSeq" id="WP_011185940.1">
    <property type="nucleotide sequence ID" value="NC_006087.1"/>
</dbReference>
<dbReference type="SMR" id="Q6AFA1"/>
<dbReference type="STRING" id="281090.Lxx10910"/>
<dbReference type="KEGG" id="lxx:Lxx10910"/>
<dbReference type="eggNOG" id="COG0013">
    <property type="taxonomic scope" value="Bacteria"/>
</dbReference>
<dbReference type="HOGENOM" id="CLU_004485_1_1_11"/>
<dbReference type="Proteomes" id="UP000001306">
    <property type="component" value="Chromosome"/>
</dbReference>
<dbReference type="GO" id="GO:0005829">
    <property type="term" value="C:cytosol"/>
    <property type="evidence" value="ECO:0007669"/>
    <property type="project" value="TreeGrafter"/>
</dbReference>
<dbReference type="GO" id="GO:0004813">
    <property type="term" value="F:alanine-tRNA ligase activity"/>
    <property type="evidence" value="ECO:0007669"/>
    <property type="project" value="UniProtKB-UniRule"/>
</dbReference>
<dbReference type="GO" id="GO:0002161">
    <property type="term" value="F:aminoacyl-tRNA deacylase activity"/>
    <property type="evidence" value="ECO:0007669"/>
    <property type="project" value="TreeGrafter"/>
</dbReference>
<dbReference type="GO" id="GO:0005524">
    <property type="term" value="F:ATP binding"/>
    <property type="evidence" value="ECO:0007669"/>
    <property type="project" value="UniProtKB-UniRule"/>
</dbReference>
<dbReference type="GO" id="GO:0000049">
    <property type="term" value="F:tRNA binding"/>
    <property type="evidence" value="ECO:0007669"/>
    <property type="project" value="UniProtKB-KW"/>
</dbReference>
<dbReference type="GO" id="GO:0008270">
    <property type="term" value="F:zinc ion binding"/>
    <property type="evidence" value="ECO:0007669"/>
    <property type="project" value="UniProtKB-UniRule"/>
</dbReference>
<dbReference type="GO" id="GO:0006419">
    <property type="term" value="P:alanyl-tRNA aminoacylation"/>
    <property type="evidence" value="ECO:0007669"/>
    <property type="project" value="UniProtKB-UniRule"/>
</dbReference>
<dbReference type="CDD" id="cd00673">
    <property type="entry name" value="AlaRS_core"/>
    <property type="match status" value="1"/>
</dbReference>
<dbReference type="FunFam" id="3.10.310.40:FF:000001">
    <property type="entry name" value="Alanine--tRNA ligase"/>
    <property type="match status" value="1"/>
</dbReference>
<dbReference type="FunFam" id="3.30.54.20:FF:000001">
    <property type="entry name" value="Alanine--tRNA ligase"/>
    <property type="match status" value="1"/>
</dbReference>
<dbReference type="FunFam" id="3.30.980.10:FF:000004">
    <property type="entry name" value="Alanine--tRNA ligase, cytoplasmic"/>
    <property type="match status" value="1"/>
</dbReference>
<dbReference type="Gene3D" id="2.40.30.130">
    <property type="match status" value="1"/>
</dbReference>
<dbReference type="Gene3D" id="3.10.310.40">
    <property type="match status" value="1"/>
</dbReference>
<dbReference type="Gene3D" id="3.30.54.20">
    <property type="match status" value="1"/>
</dbReference>
<dbReference type="Gene3D" id="6.10.250.550">
    <property type="match status" value="1"/>
</dbReference>
<dbReference type="Gene3D" id="3.30.930.10">
    <property type="entry name" value="Bira Bifunctional Protein, Domain 2"/>
    <property type="match status" value="1"/>
</dbReference>
<dbReference type="Gene3D" id="3.30.980.10">
    <property type="entry name" value="Threonyl-trna Synthetase, Chain A, domain 2"/>
    <property type="match status" value="1"/>
</dbReference>
<dbReference type="HAMAP" id="MF_00036_B">
    <property type="entry name" value="Ala_tRNA_synth_B"/>
    <property type="match status" value="1"/>
</dbReference>
<dbReference type="InterPro" id="IPR045864">
    <property type="entry name" value="aa-tRNA-synth_II/BPL/LPL"/>
</dbReference>
<dbReference type="InterPro" id="IPR002318">
    <property type="entry name" value="Ala-tRNA-lgiase_IIc"/>
</dbReference>
<dbReference type="InterPro" id="IPR018162">
    <property type="entry name" value="Ala-tRNA-ligase_IIc_anticod-bd"/>
</dbReference>
<dbReference type="InterPro" id="IPR018165">
    <property type="entry name" value="Ala-tRNA-synth_IIc_core"/>
</dbReference>
<dbReference type="InterPro" id="IPR018164">
    <property type="entry name" value="Ala-tRNA-synth_IIc_N"/>
</dbReference>
<dbReference type="InterPro" id="IPR050058">
    <property type="entry name" value="Ala-tRNA_ligase"/>
</dbReference>
<dbReference type="InterPro" id="IPR023033">
    <property type="entry name" value="Ala_tRNA_ligase_euk/bac"/>
</dbReference>
<dbReference type="InterPro" id="IPR003156">
    <property type="entry name" value="DHHA1_dom"/>
</dbReference>
<dbReference type="InterPro" id="IPR018163">
    <property type="entry name" value="Thr/Ala-tRNA-synth_IIc_edit"/>
</dbReference>
<dbReference type="InterPro" id="IPR009000">
    <property type="entry name" value="Transl_B-barrel_sf"/>
</dbReference>
<dbReference type="InterPro" id="IPR012947">
    <property type="entry name" value="tRNA_SAD"/>
</dbReference>
<dbReference type="NCBIfam" id="TIGR00344">
    <property type="entry name" value="alaS"/>
    <property type="match status" value="1"/>
</dbReference>
<dbReference type="PANTHER" id="PTHR11777:SF9">
    <property type="entry name" value="ALANINE--TRNA LIGASE, CYTOPLASMIC"/>
    <property type="match status" value="1"/>
</dbReference>
<dbReference type="PANTHER" id="PTHR11777">
    <property type="entry name" value="ALANYL-TRNA SYNTHETASE"/>
    <property type="match status" value="1"/>
</dbReference>
<dbReference type="Pfam" id="PF02272">
    <property type="entry name" value="DHHA1"/>
    <property type="match status" value="1"/>
</dbReference>
<dbReference type="Pfam" id="PF01411">
    <property type="entry name" value="tRNA-synt_2c"/>
    <property type="match status" value="1"/>
</dbReference>
<dbReference type="Pfam" id="PF07973">
    <property type="entry name" value="tRNA_SAD"/>
    <property type="match status" value="1"/>
</dbReference>
<dbReference type="PRINTS" id="PR00980">
    <property type="entry name" value="TRNASYNTHALA"/>
</dbReference>
<dbReference type="SMART" id="SM00863">
    <property type="entry name" value="tRNA_SAD"/>
    <property type="match status" value="1"/>
</dbReference>
<dbReference type="SUPFAM" id="SSF55681">
    <property type="entry name" value="Class II aaRS and biotin synthetases"/>
    <property type="match status" value="1"/>
</dbReference>
<dbReference type="SUPFAM" id="SSF101353">
    <property type="entry name" value="Putative anticodon-binding domain of alanyl-tRNA synthetase (AlaRS)"/>
    <property type="match status" value="1"/>
</dbReference>
<dbReference type="SUPFAM" id="SSF55186">
    <property type="entry name" value="ThrRS/AlaRS common domain"/>
    <property type="match status" value="1"/>
</dbReference>
<dbReference type="SUPFAM" id="SSF50447">
    <property type="entry name" value="Translation proteins"/>
    <property type="match status" value="1"/>
</dbReference>
<dbReference type="PROSITE" id="PS50860">
    <property type="entry name" value="AA_TRNA_LIGASE_II_ALA"/>
    <property type="match status" value="1"/>
</dbReference>
<organism>
    <name type="scientific">Leifsonia xyli subsp. xyli (strain CTCB07)</name>
    <dbReference type="NCBI Taxonomy" id="281090"/>
    <lineage>
        <taxon>Bacteria</taxon>
        <taxon>Bacillati</taxon>
        <taxon>Actinomycetota</taxon>
        <taxon>Actinomycetes</taxon>
        <taxon>Micrococcales</taxon>
        <taxon>Microbacteriaceae</taxon>
        <taxon>Leifsonia</taxon>
    </lineage>
</organism>
<sequence>MQTAEIHRRWLDFFARRGHTVVPSASLVSDDPSLLFTVAGMVPFVPYLTGIVPAPFPRATSVQKCIRTLDIEEVGKTPRHGTFFQMCGNFSFGDYFKEQAIAFAWDLLTTAETEGGLGFDPKDLWVTVYEEDDEAREIWRRVSGLAEERIQGLGKDTNYWSTGQPGPAGPCSEIFFDRGPAYGIDGGPATDDDRYVEIWNLVFMQFLRGEGTGKDDFEILGDLPKKNIDTGLGLERVAFLKQGVENMYEIDQVRPVLDRAAELAGKPYGNEAHEDDVRLRVVADHVRSALMLMTDGVTPSNEGRGYVLRRLLRRTVRAMWLLGVEAATFPALFPVSRDAMKAAYPEVETEFARTSQLAYAEEETFLRTLVAGTSILDTAVANTQKAGKRELAGDTAFLLHDTYGFPIDLTLEMAEEAGLSVDRAAFDTLMADQRARAKADAKAKKTALADLSVYSGLRALGETVFTGYTELETESSVLGLIIDGHSANKAVEGQVAEVILGATALYAEAGGQDADTGTIVGPGYVLDVLDVQKPVRGLVSHRVLVRSGEVGVGVPATSLVDADYRRGAKQAHSGTHIIHAALRQVLGSNAHQSGSYNKAGYLRLDFSWNQALSPETRSEIEEISNSAIRQNLEVTTRELPLAEAKALGAMALFGEKYGDTVRVVDIGGPWSRELCAGTHVARSAEIGLINLVSESSVGSTNRRVESLVGLEAFKDLAVERTIVSQLSSSLKTPREQLPEKIADLMASLKAAEKRIQAFEARAVLDRVQGLLEAVSRRGAVQVVAADAGTLSTADDLRLLAITVRDRLGSDPATVALAALAGGKPVVIVATNQAARDAGVTAGALAKTAAGVLGGGGGGKADLAQGGGTDATAIPAALAAVSTAIG</sequence>
<reference key="1">
    <citation type="journal article" date="2004" name="Mol. Plant Microbe Interact.">
        <title>The genome sequence of the Gram-positive sugarcane pathogen Leifsonia xyli subsp. xyli.</title>
        <authorList>
            <person name="Monteiro-Vitorello C.B."/>
            <person name="Camargo L.E.A."/>
            <person name="Van Sluys M.A."/>
            <person name="Kitajima J.P."/>
            <person name="Truffi D."/>
            <person name="do Amaral A.M."/>
            <person name="Harakava R."/>
            <person name="de Oliveira J.C.F."/>
            <person name="Wood D."/>
            <person name="de Oliveira M.C."/>
            <person name="Miyaki C.Y."/>
            <person name="Takita M.A."/>
            <person name="da Silva A.C.R."/>
            <person name="Furlan L.R."/>
            <person name="Carraro D.M."/>
            <person name="Camarotte G."/>
            <person name="Almeida N.F. Jr."/>
            <person name="Carrer H."/>
            <person name="Coutinho L.L."/>
            <person name="El-Dorry H.A."/>
            <person name="Ferro M.I.T."/>
            <person name="Gagliardi P.R."/>
            <person name="Giglioti E."/>
            <person name="Goldman M.H.S."/>
            <person name="Goldman G.H."/>
            <person name="Kimura E.T."/>
            <person name="Ferro E.S."/>
            <person name="Kuramae E.E."/>
            <person name="Lemos E.G.M."/>
            <person name="Lemos M.V.F."/>
            <person name="Mauro S.M.Z."/>
            <person name="Machado M.A."/>
            <person name="Marino C.L."/>
            <person name="Menck C.F."/>
            <person name="Nunes L.R."/>
            <person name="Oliveira R.C."/>
            <person name="Pereira G.G."/>
            <person name="Siqueira W."/>
            <person name="de Souza A.A."/>
            <person name="Tsai S.M."/>
            <person name="Zanca A.S."/>
            <person name="Simpson A.J.G."/>
            <person name="Brumbley S.M."/>
            <person name="Setubal J.C."/>
        </authorList>
    </citation>
    <scope>NUCLEOTIDE SEQUENCE [LARGE SCALE GENOMIC DNA]</scope>
    <source>
        <strain>CTCB07</strain>
    </source>
</reference>
<keyword id="KW-0030">Aminoacyl-tRNA synthetase</keyword>
<keyword id="KW-0067">ATP-binding</keyword>
<keyword id="KW-0963">Cytoplasm</keyword>
<keyword id="KW-0436">Ligase</keyword>
<keyword id="KW-0479">Metal-binding</keyword>
<keyword id="KW-0547">Nucleotide-binding</keyword>
<keyword id="KW-0648">Protein biosynthesis</keyword>
<keyword id="KW-1185">Reference proteome</keyword>
<keyword id="KW-0694">RNA-binding</keyword>
<keyword id="KW-0820">tRNA-binding</keyword>
<keyword id="KW-0862">Zinc</keyword>
<accession>Q6AFA1</accession>
<gene>
    <name evidence="1" type="primary">alaS</name>
    <name type="ordered locus">Lxx10910</name>
</gene>
<proteinExistence type="inferred from homology"/>